<comment type="function">
    <text evidence="1">Involved in the anomeric conversion of L-fucose.</text>
</comment>
<comment type="catalytic activity">
    <reaction evidence="1">
        <text>alpha-L-fucose = beta-L-fucose</text>
        <dbReference type="Rhea" id="RHEA:25580"/>
        <dbReference type="ChEBI" id="CHEBI:42548"/>
        <dbReference type="ChEBI" id="CHEBI:42589"/>
        <dbReference type="EC" id="5.1.3.29"/>
    </reaction>
</comment>
<comment type="pathway">
    <text evidence="1">Carbohydrate metabolism; L-fucose metabolism.</text>
</comment>
<comment type="subunit">
    <text evidence="1">Homodecamer.</text>
</comment>
<comment type="subcellular location">
    <subcellularLocation>
        <location evidence="1">Cytoplasm</location>
    </subcellularLocation>
</comment>
<comment type="similarity">
    <text evidence="1">Belongs to the RbsD / FucU family. FucU mutarotase subfamily.</text>
</comment>
<evidence type="ECO:0000255" key="1">
    <source>
        <dbReference type="HAMAP-Rule" id="MF_01662"/>
    </source>
</evidence>
<proteinExistence type="inferred from homology"/>
<feature type="chain" id="PRO_1000187194" description="L-fucose mutarotase">
    <location>
        <begin position="1"/>
        <end position="140"/>
    </location>
</feature>
<feature type="active site" description="Proton donor" evidence="1">
    <location>
        <position position="22"/>
    </location>
</feature>
<feature type="binding site" evidence="1">
    <location>
        <position position="30"/>
    </location>
    <ligand>
        <name>substrate</name>
    </ligand>
</feature>
<feature type="binding site" evidence="1">
    <location>
        <position position="107"/>
    </location>
    <ligand>
        <name>substrate</name>
    </ligand>
</feature>
<feature type="binding site" evidence="1">
    <location>
        <begin position="129"/>
        <end position="131"/>
    </location>
    <ligand>
        <name>substrate</name>
    </ligand>
</feature>
<accession>B5RDV6</accession>
<organism>
    <name type="scientific">Salmonella gallinarum (strain 287/91 / NCTC 13346)</name>
    <dbReference type="NCBI Taxonomy" id="550538"/>
    <lineage>
        <taxon>Bacteria</taxon>
        <taxon>Pseudomonadati</taxon>
        <taxon>Pseudomonadota</taxon>
        <taxon>Gammaproteobacteria</taxon>
        <taxon>Enterobacterales</taxon>
        <taxon>Enterobacteriaceae</taxon>
        <taxon>Salmonella</taxon>
    </lineage>
</organism>
<sequence length="140" mass="15264">MLKTISPLIPPTLLKVLAEMGHGDEIIFSDAHFPAHSLGPQVIRADGLSVSDLLRAIIPLFELDSYAPPLVMMAAVEGDTLDPSVEARYRDALSLEAPCPDIVRIDRYAFYERAQKAFAIVITGECAKYGNILLKKGVTP</sequence>
<gene>
    <name evidence="1" type="primary">fucU</name>
    <name type="ordered locus">SG2888</name>
</gene>
<dbReference type="EC" id="5.1.3.29" evidence="1"/>
<dbReference type="EMBL" id="AM933173">
    <property type="protein sequence ID" value="CAR38694.1"/>
    <property type="molecule type" value="Genomic_DNA"/>
</dbReference>
<dbReference type="RefSeq" id="WP_000920826.1">
    <property type="nucleotide sequence ID" value="NC_011274.1"/>
</dbReference>
<dbReference type="SMR" id="B5RDV6"/>
<dbReference type="KEGG" id="seg:SG2888"/>
<dbReference type="HOGENOM" id="CLU_120075_1_0_6"/>
<dbReference type="UniPathway" id="UPA00956"/>
<dbReference type="Proteomes" id="UP000008321">
    <property type="component" value="Chromosome"/>
</dbReference>
<dbReference type="GO" id="GO:0005737">
    <property type="term" value="C:cytoplasm"/>
    <property type="evidence" value="ECO:0007669"/>
    <property type="project" value="UniProtKB-SubCell"/>
</dbReference>
<dbReference type="GO" id="GO:0042806">
    <property type="term" value="F:fucose binding"/>
    <property type="evidence" value="ECO:0007669"/>
    <property type="project" value="InterPro"/>
</dbReference>
<dbReference type="GO" id="GO:0036373">
    <property type="term" value="F:L-fucose mutarotase activity"/>
    <property type="evidence" value="ECO:0007669"/>
    <property type="project" value="UniProtKB-EC"/>
</dbReference>
<dbReference type="GO" id="GO:0036065">
    <property type="term" value="P:fucosylation"/>
    <property type="evidence" value="ECO:0007669"/>
    <property type="project" value="TreeGrafter"/>
</dbReference>
<dbReference type="GO" id="GO:0042354">
    <property type="term" value="P:L-fucose metabolic process"/>
    <property type="evidence" value="ECO:0007669"/>
    <property type="project" value="UniProtKB-UniRule"/>
</dbReference>
<dbReference type="FunFam" id="3.40.1650.10:FF:000001">
    <property type="entry name" value="L-fucose mutarotase"/>
    <property type="match status" value="1"/>
</dbReference>
<dbReference type="Gene3D" id="3.40.1650.10">
    <property type="entry name" value="RbsD-like domain"/>
    <property type="match status" value="1"/>
</dbReference>
<dbReference type="HAMAP" id="MF_01662">
    <property type="entry name" value="L_fucose_rotase"/>
    <property type="match status" value="1"/>
</dbReference>
<dbReference type="InterPro" id="IPR023751">
    <property type="entry name" value="L-fucose_mutarotase"/>
</dbReference>
<dbReference type="InterPro" id="IPR023750">
    <property type="entry name" value="RbsD-like_sf"/>
</dbReference>
<dbReference type="InterPro" id="IPR050443">
    <property type="entry name" value="RbsD/FucU_mutarotase"/>
</dbReference>
<dbReference type="InterPro" id="IPR007721">
    <property type="entry name" value="RbsD_FucU"/>
</dbReference>
<dbReference type="NCBIfam" id="NF011949">
    <property type="entry name" value="PRK15420.1"/>
    <property type="match status" value="1"/>
</dbReference>
<dbReference type="PANTHER" id="PTHR31690">
    <property type="entry name" value="FUCOSE MUTAROTASE"/>
    <property type="match status" value="1"/>
</dbReference>
<dbReference type="PANTHER" id="PTHR31690:SF4">
    <property type="entry name" value="FUCOSE MUTAROTASE"/>
    <property type="match status" value="1"/>
</dbReference>
<dbReference type="Pfam" id="PF05025">
    <property type="entry name" value="RbsD_FucU"/>
    <property type="match status" value="1"/>
</dbReference>
<dbReference type="SUPFAM" id="SSF102546">
    <property type="entry name" value="RbsD-like"/>
    <property type="match status" value="1"/>
</dbReference>
<keyword id="KW-0119">Carbohydrate metabolism</keyword>
<keyword id="KW-0963">Cytoplasm</keyword>
<keyword id="KW-0294">Fucose metabolism</keyword>
<keyword id="KW-0413">Isomerase</keyword>
<reference key="1">
    <citation type="journal article" date="2008" name="Genome Res.">
        <title>Comparative genome analysis of Salmonella enteritidis PT4 and Salmonella gallinarum 287/91 provides insights into evolutionary and host adaptation pathways.</title>
        <authorList>
            <person name="Thomson N.R."/>
            <person name="Clayton D.J."/>
            <person name="Windhorst D."/>
            <person name="Vernikos G."/>
            <person name="Davidson S."/>
            <person name="Churcher C."/>
            <person name="Quail M.A."/>
            <person name="Stevens M."/>
            <person name="Jones M.A."/>
            <person name="Watson M."/>
            <person name="Barron A."/>
            <person name="Layton A."/>
            <person name="Pickard D."/>
            <person name="Kingsley R.A."/>
            <person name="Bignell A."/>
            <person name="Clark L."/>
            <person name="Harris B."/>
            <person name="Ormond D."/>
            <person name="Abdellah Z."/>
            <person name="Brooks K."/>
            <person name="Cherevach I."/>
            <person name="Chillingworth T."/>
            <person name="Woodward J."/>
            <person name="Norberczak H."/>
            <person name="Lord A."/>
            <person name="Arrowsmith C."/>
            <person name="Jagels K."/>
            <person name="Moule S."/>
            <person name="Mungall K."/>
            <person name="Saunders M."/>
            <person name="Whitehead S."/>
            <person name="Chabalgoity J.A."/>
            <person name="Maskell D."/>
            <person name="Humphreys T."/>
            <person name="Roberts M."/>
            <person name="Barrow P.A."/>
            <person name="Dougan G."/>
            <person name="Parkhill J."/>
        </authorList>
    </citation>
    <scope>NUCLEOTIDE SEQUENCE [LARGE SCALE GENOMIC DNA]</scope>
    <source>
        <strain>287/91 / NCTC 13346</strain>
    </source>
</reference>
<protein>
    <recommendedName>
        <fullName evidence="1">L-fucose mutarotase</fullName>
        <ecNumber evidence="1">5.1.3.29</ecNumber>
    </recommendedName>
    <alternativeName>
        <fullName evidence="1">Fucose 1-epimerase</fullName>
    </alternativeName>
    <alternativeName>
        <fullName evidence="1">Type-2 mutarotase</fullName>
    </alternativeName>
</protein>
<name>FUCM_SALG2</name>